<protein>
    <recommendedName>
        <fullName evidence="1">Aliphatic sulfonates import ATP-binding protein SsuB 1</fullName>
        <ecNumber evidence="1">7.6.2.14</ecNumber>
    </recommendedName>
</protein>
<feature type="chain" id="PRO_0000279952" description="Aliphatic sulfonates import ATP-binding protein SsuB 1">
    <location>
        <begin position="1"/>
        <end position="265"/>
    </location>
</feature>
<feature type="domain" description="ABC transporter" evidence="1">
    <location>
        <begin position="31"/>
        <end position="255"/>
    </location>
</feature>
<feature type="binding site" evidence="1">
    <location>
        <begin position="63"/>
        <end position="70"/>
    </location>
    <ligand>
        <name>ATP</name>
        <dbReference type="ChEBI" id="CHEBI:30616"/>
    </ligand>
</feature>
<comment type="function">
    <text evidence="1">Part of the ABC transporter complex SsuABC involved in aliphatic sulfonates import. Responsible for energy coupling to the transport system.</text>
</comment>
<comment type="catalytic activity">
    <reaction evidence="1">
        <text>ATP + H2O + aliphatic sulfonate-[sulfonate-binding protein]Side 1 = ADP + phosphate + aliphatic sulfonateSide 2 + [sulfonate-binding protein]Side 1.</text>
        <dbReference type="EC" id="7.6.2.14"/>
    </reaction>
</comment>
<comment type="subunit">
    <text evidence="1">The complex is composed of two ATP-binding proteins (SsuB), two transmembrane proteins (SsuC) and a solute-binding protein (SsuA).</text>
</comment>
<comment type="subcellular location">
    <subcellularLocation>
        <location evidence="1">Cell inner membrane</location>
        <topology evidence="1">Peripheral membrane protein</topology>
    </subcellularLocation>
</comment>
<comment type="similarity">
    <text evidence="1">Belongs to the ABC transporter superfamily. Aliphatic sulfonates importer (TC 3.A.1.17.2) family.</text>
</comment>
<keyword id="KW-0067">ATP-binding</keyword>
<keyword id="KW-0997">Cell inner membrane</keyword>
<keyword id="KW-1003">Cell membrane</keyword>
<keyword id="KW-0472">Membrane</keyword>
<keyword id="KW-0547">Nucleotide-binding</keyword>
<keyword id="KW-1278">Translocase</keyword>
<keyword id="KW-0813">Transport</keyword>
<accession>Q98DT6</accession>
<gene>
    <name evidence="1" type="primary">ssuB1</name>
    <name type="ordered locus">mll4555</name>
</gene>
<name>SSUB1_RHILO</name>
<organism>
    <name type="scientific">Mesorhizobium japonicum (strain LMG 29417 / CECT 9101 / MAFF 303099)</name>
    <name type="common">Mesorhizobium loti (strain MAFF 303099)</name>
    <dbReference type="NCBI Taxonomy" id="266835"/>
    <lineage>
        <taxon>Bacteria</taxon>
        <taxon>Pseudomonadati</taxon>
        <taxon>Pseudomonadota</taxon>
        <taxon>Alphaproteobacteria</taxon>
        <taxon>Hyphomicrobiales</taxon>
        <taxon>Phyllobacteriaceae</taxon>
        <taxon>Mesorhizobium</taxon>
    </lineage>
</organism>
<reference key="1">
    <citation type="journal article" date="2000" name="DNA Res.">
        <title>Complete genome structure of the nitrogen-fixing symbiotic bacterium Mesorhizobium loti.</title>
        <authorList>
            <person name="Kaneko T."/>
            <person name="Nakamura Y."/>
            <person name="Sato S."/>
            <person name="Asamizu E."/>
            <person name="Kato T."/>
            <person name="Sasamoto S."/>
            <person name="Watanabe A."/>
            <person name="Idesawa K."/>
            <person name="Ishikawa A."/>
            <person name="Kawashima K."/>
            <person name="Kimura T."/>
            <person name="Kishida Y."/>
            <person name="Kiyokawa C."/>
            <person name="Kohara M."/>
            <person name="Matsumoto M."/>
            <person name="Matsuno A."/>
            <person name="Mochizuki Y."/>
            <person name="Nakayama S."/>
            <person name="Nakazaki N."/>
            <person name="Shimpo S."/>
            <person name="Sugimoto M."/>
            <person name="Takeuchi C."/>
            <person name="Yamada M."/>
            <person name="Tabata S."/>
        </authorList>
    </citation>
    <scope>NUCLEOTIDE SEQUENCE [LARGE SCALE GENOMIC DNA]</scope>
    <source>
        <strain>LMG 29417 / CECT 9101 / MAFF 303099</strain>
    </source>
</reference>
<dbReference type="EC" id="7.6.2.14" evidence="1"/>
<dbReference type="EMBL" id="BA000012">
    <property type="protein sequence ID" value="BAB51184.1"/>
    <property type="molecule type" value="Genomic_DNA"/>
</dbReference>
<dbReference type="RefSeq" id="WP_010912526.1">
    <property type="nucleotide sequence ID" value="NC_002678.2"/>
</dbReference>
<dbReference type="SMR" id="Q98DT6"/>
<dbReference type="KEGG" id="mlo:mll4555"/>
<dbReference type="PATRIC" id="fig|266835.9.peg.3598"/>
<dbReference type="eggNOG" id="COG1116">
    <property type="taxonomic scope" value="Bacteria"/>
</dbReference>
<dbReference type="HOGENOM" id="CLU_000604_1_22_5"/>
<dbReference type="Proteomes" id="UP000000552">
    <property type="component" value="Chromosome"/>
</dbReference>
<dbReference type="GO" id="GO:0005886">
    <property type="term" value="C:plasma membrane"/>
    <property type="evidence" value="ECO:0007669"/>
    <property type="project" value="UniProtKB-SubCell"/>
</dbReference>
<dbReference type="GO" id="GO:0005524">
    <property type="term" value="F:ATP binding"/>
    <property type="evidence" value="ECO:0007669"/>
    <property type="project" value="UniProtKB-KW"/>
</dbReference>
<dbReference type="GO" id="GO:0016887">
    <property type="term" value="F:ATP hydrolysis activity"/>
    <property type="evidence" value="ECO:0007669"/>
    <property type="project" value="InterPro"/>
</dbReference>
<dbReference type="CDD" id="cd03293">
    <property type="entry name" value="ABC_NrtD_SsuB_transporters"/>
    <property type="match status" value="1"/>
</dbReference>
<dbReference type="Gene3D" id="3.40.50.300">
    <property type="entry name" value="P-loop containing nucleotide triphosphate hydrolases"/>
    <property type="match status" value="1"/>
</dbReference>
<dbReference type="InterPro" id="IPR003593">
    <property type="entry name" value="AAA+_ATPase"/>
</dbReference>
<dbReference type="InterPro" id="IPR003439">
    <property type="entry name" value="ABC_transporter-like_ATP-bd"/>
</dbReference>
<dbReference type="InterPro" id="IPR017871">
    <property type="entry name" value="ABC_transporter-like_CS"/>
</dbReference>
<dbReference type="InterPro" id="IPR050166">
    <property type="entry name" value="ABC_transporter_ATP-bind"/>
</dbReference>
<dbReference type="InterPro" id="IPR027417">
    <property type="entry name" value="P-loop_NTPase"/>
</dbReference>
<dbReference type="PANTHER" id="PTHR42788:SF17">
    <property type="entry name" value="ALIPHATIC SULFONATES IMPORT ATP-BINDING PROTEIN SSUB"/>
    <property type="match status" value="1"/>
</dbReference>
<dbReference type="PANTHER" id="PTHR42788">
    <property type="entry name" value="TAURINE IMPORT ATP-BINDING PROTEIN-RELATED"/>
    <property type="match status" value="1"/>
</dbReference>
<dbReference type="Pfam" id="PF00005">
    <property type="entry name" value="ABC_tran"/>
    <property type="match status" value="1"/>
</dbReference>
<dbReference type="SMART" id="SM00382">
    <property type="entry name" value="AAA"/>
    <property type="match status" value="1"/>
</dbReference>
<dbReference type="SUPFAM" id="SSF52540">
    <property type="entry name" value="P-loop containing nucleoside triphosphate hydrolases"/>
    <property type="match status" value="1"/>
</dbReference>
<dbReference type="PROSITE" id="PS00211">
    <property type="entry name" value="ABC_TRANSPORTER_1"/>
    <property type="match status" value="1"/>
</dbReference>
<dbReference type="PROSITE" id="PS50893">
    <property type="entry name" value="ABC_TRANSPORTER_2"/>
    <property type="match status" value="1"/>
</dbReference>
<dbReference type="PROSITE" id="PS51291">
    <property type="entry name" value="SSUB"/>
    <property type="match status" value="1"/>
</dbReference>
<proteinExistence type="inferred from homology"/>
<evidence type="ECO:0000255" key="1">
    <source>
        <dbReference type="HAMAP-Rule" id="MF_01724"/>
    </source>
</evidence>
<sequence>MPAASLTSVRSFVAAPVPTRPAISVEGRRAFAFKGVEKRFGDKIVLDGIDLDVPAGQFVAVIGKSGCGKSTLLRLLAGLDRPTSGSLTLGAEEEGHSRTRFMFQEPRLLPWASVVKNVEIGLTGIAAGQDARQRALDILGEVGLADRADEWPSVLSGGQKQRVALARALVGHPQILALDEPLGALDALTRIEMQQLLERIWLAQKFTAVLVTHDVAEAVTLADRVVVISAGRIALDLEVPVARPRRRGSAELARLEGTILDRLFG</sequence>